<feature type="chain" id="PRO_0000330749" description="Dolichyldiphosphatase 1">
    <location>
        <begin position="1"/>
        <end position="229"/>
    </location>
</feature>
<feature type="transmembrane region" description="Helical" evidence="2">
    <location>
        <begin position="27"/>
        <end position="47"/>
    </location>
</feature>
<feature type="transmembrane region" description="Helical" evidence="2">
    <location>
        <begin position="94"/>
        <end position="114"/>
    </location>
</feature>
<feature type="transmembrane region" description="Helical" evidence="2">
    <location>
        <begin position="120"/>
        <end position="140"/>
    </location>
</feature>
<feature type="transmembrane region" description="Helical" evidence="2">
    <location>
        <begin position="156"/>
        <end position="176"/>
    </location>
</feature>
<dbReference type="EC" id="3.6.1.43"/>
<dbReference type="EMBL" id="AAFI02000012">
    <property type="protein sequence ID" value="EAL70188.1"/>
    <property type="molecule type" value="Genomic_DNA"/>
</dbReference>
<dbReference type="RefSeq" id="XP_643909.1">
    <property type="nucleotide sequence ID" value="XM_638817.1"/>
</dbReference>
<dbReference type="SMR" id="Q86IX2"/>
<dbReference type="FunCoup" id="Q86IX2">
    <property type="interactions" value="865"/>
</dbReference>
<dbReference type="STRING" id="44689.Q86IX2"/>
<dbReference type="PaxDb" id="44689-DDB0266806"/>
<dbReference type="EnsemblProtists" id="EAL70188">
    <property type="protein sequence ID" value="EAL70188"/>
    <property type="gene ID" value="DDB_G0274591"/>
</dbReference>
<dbReference type="GeneID" id="8619336"/>
<dbReference type="KEGG" id="ddi:DDB_G0274591"/>
<dbReference type="dictyBase" id="DDB_G0274591">
    <property type="gene designation" value="dolpp1"/>
</dbReference>
<dbReference type="VEuPathDB" id="AmoebaDB:DDB_G0274591"/>
<dbReference type="eggNOG" id="KOG3146">
    <property type="taxonomic scope" value="Eukaryota"/>
</dbReference>
<dbReference type="HOGENOM" id="CLU_074922_1_2_1"/>
<dbReference type="InParanoid" id="Q86IX2"/>
<dbReference type="OMA" id="VYATLIW"/>
<dbReference type="PhylomeDB" id="Q86IX2"/>
<dbReference type="Reactome" id="R-DDI-446199">
    <property type="pathway name" value="Synthesis of Dolichyl-phosphate"/>
</dbReference>
<dbReference type="UniPathway" id="UPA00378"/>
<dbReference type="PRO" id="PR:Q86IX2"/>
<dbReference type="Proteomes" id="UP000002195">
    <property type="component" value="Chromosome 2"/>
</dbReference>
<dbReference type="GO" id="GO:0005789">
    <property type="term" value="C:endoplasmic reticulum membrane"/>
    <property type="evidence" value="ECO:0000318"/>
    <property type="project" value="GO_Central"/>
</dbReference>
<dbReference type="GO" id="GO:0047874">
    <property type="term" value="F:dolichyldiphosphatase activity"/>
    <property type="evidence" value="ECO:0000250"/>
    <property type="project" value="dictyBase"/>
</dbReference>
<dbReference type="GO" id="GO:0006487">
    <property type="term" value="P:protein N-linked glycosylation"/>
    <property type="evidence" value="ECO:0000250"/>
    <property type="project" value="dictyBase"/>
</dbReference>
<dbReference type="CDD" id="cd03382">
    <property type="entry name" value="PAP2_dolichyldiphosphatase"/>
    <property type="match status" value="1"/>
</dbReference>
<dbReference type="Gene3D" id="1.20.144.10">
    <property type="entry name" value="Phosphatidic acid phosphatase type 2/haloperoxidase"/>
    <property type="match status" value="1"/>
</dbReference>
<dbReference type="InterPro" id="IPR039667">
    <property type="entry name" value="Dolichyldiphosphatase_PAP2"/>
</dbReference>
<dbReference type="InterPro" id="IPR036938">
    <property type="entry name" value="P_Acid_Pase_2/haloperoxi_sf"/>
</dbReference>
<dbReference type="InterPro" id="IPR000326">
    <property type="entry name" value="P_Acid_Pase_2/haloperoxidase"/>
</dbReference>
<dbReference type="PANTHER" id="PTHR11247:SF1">
    <property type="entry name" value="DOLICHYLDIPHOSPHATASE 1"/>
    <property type="match status" value="1"/>
</dbReference>
<dbReference type="PANTHER" id="PTHR11247">
    <property type="entry name" value="PALMITOYL-PROTEIN THIOESTERASE/DOLICHYLDIPHOSPHATASE 1"/>
    <property type="match status" value="1"/>
</dbReference>
<dbReference type="Pfam" id="PF01569">
    <property type="entry name" value="PAP2"/>
    <property type="match status" value="1"/>
</dbReference>
<dbReference type="SMART" id="SM00014">
    <property type="entry name" value="acidPPc"/>
    <property type="match status" value="1"/>
</dbReference>
<dbReference type="SUPFAM" id="SSF48317">
    <property type="entry name" value="Acid phosphatase/Vanadium-dependent haloperoxidase"/>
    <property type="match status" value="1"/>
</dbReference>
<keyword id="KW-0256">Endoplasmic reticulum</keyword>
<keyword id="KW-0378">Hydrolase</keyword>
<keyword id="KW-0472">Membrane</keyword>
<keyword id="KW-1185">Reference proteome</keyword>
<keyword id="KW-0812">Transmembrane</keyword>
<keyword id="KW-1133">Transmembrane helix</keyword>
<gene>
    <name type="primary">dolpp1</name>
    <name type="ORF">DDB_G0274591</name>
</gene>
<proteinExistence type="inferred from homology"/>
<protein>
    <recommendedName>
        <fullName>Dolichyldiphosphatase 1</fullName>
        <ecNumber>3.6.1.43</ecNumber>
    </recommendedName>
    <alternativeName>
        <fullName>Dolichyl pyrophosphate phosphatase 1</fullName>
    </alternativeName>
</protein>
<accession>Q86IX2</accession>
<accession>Q556A1</accession>
<sequence>MEQEVYTALTFVELTTVHYQHDDPFGLFNAYVTLIPIAIAIGVITLILFRRDVRTISIFLGLLFSECTNYVLKKSIKEHRPTMWKELRKQSYGMPSSHSQFMFFFAVLMTLFYLKKRIRFGSKILPIISVTFLFFLAAGVAYSRVHLYYHTAKQVFCGSFIGICLGFIWYGVIEYIFRPYLFPIIINHPIGKYFYLRDSSEIEDLLNFEYTNVMNKVKTINKTKPIKTK</sequence>
<evidence type="ECO:0000250" key="1"/>
<evidence type="ECO:0000255" key="2"/>
<evidence type="ECO:0000305" key="3"/>
<comment type="function">
    <text evidence="1">Required for efficient N-glycosylation. Necessary for maintaining optimal levels of dolichol-linked oligosaccharides. Hydrolyzes dolichyl pyrophosphate at a very high rate and dolichyl monophosphate at a much lower rate. Does not act on phosphatidate (By similarity).</text>
</comment>
<comment type="catalytic activity">
    <reaction>
        <text>a di-trans,poly-cis-dolichyl diphosphate + H2O = a di-trans,poly-cis-dolichyl phosphate + phosphate + H(+)</text>
        <dbReference type="Rhea" id="RHEA:14385"/>
        <dbReference type="Rhea" id="RHEA-COMP:19498"/>
        <dbReference type="Rhea" id="RHEA-COMP:19506"/>
        <dbReference type="ChEBI" id="CHEBI:15377"/>
        <dbReference type="ChEBI" id="CHEBI:15378"/>
        <dbReference type="ChEBI" id="CHEBI:43474"/>
        <dbReference type="ChEBI" id="CHEBI:57497"/>
        <dbReference type="ChEBI" id="CHEBI:57683"/>
        <dbReference type="EC" id="3.6.1.43"/>
    </reaction>
</comment>
<comment type="pathway">
    <text>Protein modification; protein glycosylation.</text>
</comment>
<comment type="subcellular location">
    <subcellularLocation>
        <location evidence="1">Endoplasmic reticulum membrane</location>
        <topology evidence="1">Multi-pass membrane protein</topology>
    </subcellularLocation>
</comment>
<comment type="similarity">
    <text evidence="3">Belongs to the dolichyldiphosphatase family.</text>
</comment>
<reference key="1">
    <citation type="journal article" date="2002" name="Nature">
        <title>Sequence and analysis of chromosome 2 of Dictyostelium discoideum.</title>
        <authorList>
            <person name="Gloeckner G."/>
            <person name="Eichinger L."/>
            <person name="Szafranski K."/>
            <person name="Pachebat J.A."/>
            <person name="Bankier A.T."/>
            <person name="Dear P.H."/>
            <person name="Lehmann R."/>
            <person name="Baumgart C."/>
            <person name="Parra G."/>
            <person name="Abril J.F."/>
            <person name="Guigo R."/>
            <person name="Kumpf K."/>
            <person name="Tunggal B."/>
            <person name="Cox E.C."/>
            <person name="Quail M.A."/>
            <person name="Platzer M."/>
            <person name="Rosenthal A."/>
            <person name="Noegel A.A."/>
        </authorList>
    </citation>
    <scope>NUCLEOTIDE SEQUENCE [LARGE SCALE GENOMIC DNA]</scope>
    <source>
        <strain>AX4</strain>
    </source>
</reference>
<reference key="2">
    <citation type="journal article" date="2005" name="Nature">
        <title>The genome of the social amoeba Dictyostelium discoideum.</title>
        <authorList>
            <person name="Eichinger L."/>
            <person name="Pachebat J.A."/>
            <person name="Gloeckner G."/>
            <person name="Rajandream M.A."/>
            <person name="Sucgang R."/>
            <person name="Berriman M."/>
            <person name="Song J."/>
            <person name="Olsen R."/>
            <person name="Szafranski K."/>
            <person name="Xu Q."/>
            <person name="Tunggal B."/>
            <person name="Kummerfeld S."/>
            <person name="Madera M."/>
            <person name="Konfortov B.A."/>
            <person name="Rivero F."/>
            <person name="Bankier A.T."/>
            <person name="Lehmann R."/>
            <person name="Hamlin N."/>
            <person name="Davies R."/>
            <person name="Gaudet P."/>
            <person name="Fey P."/>
            <person name="Pilcher K."/>
            <person name="Chen G."/>
            <person name="Saunders D."/>
            <person name="Sodergren E.J."/>
            <person name="Davis P."/>
            <person name="Kerhornou A."/>
            <person name="Nie X."/>
            <person name="Hall N."/>
            <person name="Anjard C."/>
            <person name="Hemphill L."/>
            <person name="Bason N."/>
            <person name="Farbrother P."/>
            <person name="Desany B."/>
            <person name="Just E."/>
            <person name="Morio T."/>
            <person name="Rost R."/>
            <person name="Churcher C.M."/>
            <person name="Cooper J."/>
            <person name="Haydock S."/>
            <person name="van Driessche N."/>
            <person name="Cronin A."/>
            <person name="Goodhead I."/>
            <person name="Muzny D.M."/>
            <person name="Mourier T."/>
            <person name="Pain A."/>
            <person name="Lu M."/>
            <person name="Harper D."/>
            <person name="Lindsay R."/>
            <person name="Hauser H."/>
            <person name="James K.D."/>
            <person name="Quiles M."/>
            <person name="Madan Babu M."/>
            <person name="Saito T."/>
            <person name="Buchrieser C."/>
            <person name="Wardroper A."/>
            <person name="Felder M."/>
            <person name="Thangavelu M."/>
            <person name="Johnson D."/>
            <person name="Knights A."/>
            <person name="Loulseged H."/>
            <person name="Mungall K.L."/>
            <person name="Oliver K."/>
            <person name="Price C."/>
            <person name="Quail M.A."/>
            <person name="Urushihara H."/>
            <person name="Hernandez J."/>
            <person name="Rabbinowitsch E."/>
            <person name="Steffen D."/>
            <person name="Sanders M."/>
            <person name="Ma J."/>
            <person name="Kohara Y."/>
            <person name="Sharp S."/>
            <person name="Simmonds M.N."/>
            <person name="Spiegler S."/>
            <person name="Tivey A."/>
            <person name="Sugano S."/>
            <person name="White B."/>
            <person name="Walker D."/>
            <person name="Woodward J.R."/>
            <person name="Winckler T."/>
            <person name="Tanaka Y."/>
            <person name="Shaulsky G."/>
            <person name="Schleicher M."/>
            <person name="Weinstock G.M."/>
            <person name="Rosenthal A."/>
            <person name="Cox E.C."/>
            <person name="Chisholm R.L."/>
            <person name="Gibbs R.A."/>
            <person name="Loomis W.F."/>
            <person name="Platzer M."/>
            <person name="Kay R.R."/>
            <person name="Williams J.G."/>
            <person name="Dear P.H."/>
            <person name="Noegel A.A."/>
            <person name="Barrell B.G."/>
            <person name="Kuspa A."/>
        </authorList>
    </citation>
    <scope>NUCLEOTIDE SEQUENCE [LARGE SCALE GENOMIC DNA]</scope>
    <source>
        <strain>AX4</strain>
    </source>
</reference>
<organism>
    <name type="scientific">Dictyostelium discoideum</name>
    <name type="common">Social amoeba</name>
    <dbReference type="NCBI Taxonomy" id="44689"/>
    <lineage>
        <taxon>Eukaryota</taxon>
        <taxon>Amoebozoa</taxon>
        <taxon>Evosea</taxon>
        <taxon>Eumycetozoa</taxon>
        <taxon>Dictyostelia</taxon>
        <taxon>Dictyosteliales</taxon>
        <taxon>Dictyosteliaceae</taxon>
        <taxon>Dictyostelium</taxon>
    </lineage>
</organism>
<name>DOPP1_DICDI</name>